<keyword id="KW-0275">Fatty acid biosynthesis</keyword>
<keyword id="KW-0276">Fatty acid metabolism</keyword>
<keyword id="KW-0378">Hydrolase</keyword>
<keyword id="KW-0444">Lipid biosynthesis</keyword>
<keyword id="KW-0443">Lipid metabolism</keyword>
<keyword id="KW-1185">Reference proteome</keyword>
<evidence type="ECO:0000255" key="1">
    <source>
        <dbReference type="HAMAP-Rule" id="MF_01950"/>
    </source>
</evidence>
<sequence length="193" mass="22917">MNFLAHLHLAHLADSSLSGNLLADFVRGNPATHYPPDVVEGIYMHRRIDVMTDNLPEVREAREWFRHETRRVAPITLDVMWDHFLSRHWTQISPDFPLQAFVGYAHAQVATILPDSPPRFVNLNDYLWSEKWLERYRDMDFIQNVLNGMANRRPRLDALRDSWYDLDAHYDALEERFWHFYPRMMAQAARKAL</sequence>
<feature type="chain" id="PRO_0000226273" description="Acyl carrier protein phosphodiesterase">
    <location>
        <begin position="1"/>
        <end position="193"/>
    </location>
</feature>
<proteinExistence type="inferred from homology"/>
<gene>
    <name evidence="1" type="primary">acpH</name>
    <name type="ordered locus">STM0403</name>
</gene>
<dbReference type="EC" id="3.1.4.14" evidence="1"/>
<dbReference type="EMBL" id="AE006468">
    <property type="protein sequence ID" value="AAL19357.1"/>
    <property type="molecule type" value="Genomic_DNA"/>
</dbReference>
<dbReference type="RefSeq" id="WP_001009858.1">
    <property type="nucleotide sequence ID" value="NC_003197.2"/>
</dbReference>
<dbReference type="SMR" id="Q7CR41"/>
<dbReference type="STRING" id="99287.STM0403"/>
<dbReference type="PaxDb" id="99287-STM0403"/>
<dbReference type="KEGG" id="stm:STM0403"/>
<dbReference type="PATRIC" id="fig|99287.12.peg.430"/>
<dbReference type="HOGENOM" id="CLU_099370_1_0_6"/>
<dbReference type="OMA" id="MNFLAHI"/>
<dbReference type="PhylomeDB" id="Q7CR41"/>
<dbReference type="BioCyc" id="SENT99287:STM0403-MONOMER"/>
<dbReference type="Proteomes" id="UP000001014">
    <property type="component" value="Chromosome"/>
</dbReference>
<dbReference type="GO" id="GO:0008770">
    <property type="term" value="F:[acyl-carrier-protein] phosphodiesterase activity"/>
    <property type="evidence" value="ECO:0000318"/>
    <property type="project" value="GO_Central"/>
</dbReference>
<dbReference type="GO" id="GO:0006633">
    <property type="term" value="P:fatty acid biosynthetic process"/>
    <property type="evidence" value="ECO:0000318"/>
    <property type="project" value="GO_Central"/>
</dbReference>
<dbReference type="HAMAP" id="MF_01950">
    <property type="entry name" value="AcpH"/>
    <property type="match status" value="1"/>
</dbReference>
<dbReference type="InterPro" id="IPR007431">
    <property type="entry name" value="ACP_PD"/>
</dbReference>
<dbReference type="InterPro" id="IPR023491">
    <property type="entry name" value="ACP_phosphodiesterase_gpbac"/>
</dbReference>
<dbReference type="NCBIfam" id="NF007466">
    <property type="entry name" value="PRK10045.1"/>
    <property type="match status" value="1"/>
</dbReference>
<dbReference type="PANTHER" id="PTHR38764">
    <property type="entry name" value="ACYL CARRIER PROTEIN PHOSPHODIESTERASE"/>
    <property type="match status" value="1"/>
</dbReference>
<dbReference type="PANTHER" id="PTHR38764:SF1">
    <property type="entry name" value="ACYL CARRIER PROTEIN PHOSPHODIESTERASE"/>
    <property type="match status" value="1"/>
</dbReference>
<dbReference type="Pfam" id="PF04336">
    <property type="entry name" value="ACP_PD"/>
    <property type="match status" value="1"/>
</dbReference>
<dbReference type="PIRSF" id="PIRSF011489">
    <property type="entry name" value="DUF479"/>
    <property type="match status" value="1"/>
</dbReference>
<name>ACPH_SALTY</name>
<reference key="1">
    <citation type="journal article" date="2001" name="Nature">
        <title>Complete genome sequence of Salmonella enterica serovar Typhimurium LT2.</title>
        <authorList>
            <person name="McClelland M."/>
            <person name="Sanderson K.E."/>
            <person name="Spieth J."/>
            <person name="Clifton S.W."/>
            <person name="Latreille P."/>
            <person name="Courtney L."/>
            <person name="Porwollik S."/>
            <person name="Ali J."/>
            <person name="Dante M."/>
            <person name="Du F."/>
            <person name="Hou S."/>
            <person name="Layman D."/>
            <person name="Leonard S."/>
            <person name="Nguyen C."/>
            <person name="Scott K."/>
            <person name="Holmes A."/>
            <person name="Grewal N."/>
            <person name="Mulvaney E."/>
            <person name="Ryan E."/>
            <person name="Sun H."/>
            <person name="Florea L."/>
            <person name="Miller W."/>
            <person name="Stoneking T."/>
            <person name="Nhan M."/>
            <person name="Waterston R."/>
            <person name="Wilson R.K."/>
        </authorList>
    </citation>
    <scope>NUCLEOTIDE SEQUENCE [LARGE SCALE GENOMIC DNA]</scope>
    <source>
        <strain>LT2 / SGSC1412 / ATCC 700720</strain>
    </source>
</reference>
<comment type="function">
    <text evidence="1">Converts holo-ACP to apo-ACP by hydrolytic cleavage of the phosphopantetheine prosthetic group from ACP.</text>
</comment>
<comment type="catalytic activity">
    <reaction evidence="1">
        <text>holo-[ACP] + H2O = apo-[ACP] + (R)-4'-phosphopantetheine + H(+)</text>
        <dbReference type="Rhea" id="RHEA:20537"/>
        <dbReference type="Rhea" id="RHEA-COMP:9685"/>
        <dbReference type="Rhea" id="RHEA-COMP:9690"/>
        <dbReference type="ChEBI" id="CHEBI:15377"/>
        <dbReference type="ChEBI" id="CHEBI:15378"/>
        <dbReference type="ChEBI" id="CHEBI:29999"/>
        <dbReference type="ChEBI" id="CHEBI:61723"/>
        <dbReference type="ChEBI" id="CHEBI:64479"/>
        <dbReference type="EC" id="3.1.4.14"/>
    </reaction>
</comment>
<comment type="similarity">
    <text evidence="1">Belongs to the AcpH family.</text>
</comment>
<accession>Q7CR41</accession>
<organism>
    <name type="scientific">Salmonella typhimurium (strain LT2 / SGSC1412 / ATCC 700720)</name>
    <dbReference type="NCBI Taxonomy" id="99287"/>
    <lineage>
        <taxon>Bacteria</taxon>
        <taxon>Pseudomonadati</taxon>
        <taxon>Pseudomonadota</taxon>
        <taxon>Gammaproteobacteria</taxon>
        <taxon>Enterobacterales</taxon>
        <taxon>Enterobacteriaceae</taxon>
        <taxon>Salmonella</taxon>
    </lineage>
</organism>
<protein>
    <recommendedName>
        <fullName evidence="1">Acyl carrier protein phosphodiesterase</fullName>
        <shortName evidence="1">ACP phosphodiesterase</shortName>
        <ecNumber evidence="1">3.1.4.14</ecNumber>
    </recommendedName>
</protein>